<reference key="1">
    <citation type="journal article" date="2006" name="Proc. Natl. Acad. Sci. U.S.A.">
        <title>Identification of genes subject to positive selection in uropathogenic strains of Escherichia coli: a comparative genomics approach.</title>
        <authorList>
            <person name="Chen S.L."/>
            <person name="Hung C.-S."/>
            <person name="Xu J."/>
            <person name="Reigstad C.S."/>
            <person name="Magrini V."/>
            <person name="Sabo A."/>
            <person name="Blasiar D."/>
            <person name="Bieri T."/>
            <person name="Meyer R.R."/>
            <person name="Ozersky P."/>
            <person name="Armstrong J.R."/>
            <person name="Fulton R.S."/>
            <person name="Latreille J.P."/>
            <person name="Spieth J."/>
            <person name="Hooton T.M."/>
            <person name="Mardis E.R."/>
            <person name="Hultgren S.J."/>
            <person name="Gordon J.I."/>
        </authorList>
    </citation>
    <scope>NUCLEOTIDE SEQUENCE [LARGE SCALE GENOMIC DNA]</scope>
    <source>
        <strain>UTI89 / UPEC</strain>
    </source>
</reference>
<dbReference type="EMBL" id="CP000243">
    <property type="protein sequence ID" value="ABE06093.1"/>
    <property type="molecule type" value="Genomic_DNA"/>
</dbReference>
<dbReference type="RefSeq" id="WP_001041793.1">
    <property type="nucleotide sequence ID" value="NZ_CP064825.1"/>
</dbReference>
<dbReference type="SMR" id="Q1REX1"/>
<dbReference type="KEGG" id="eci:UTI89_C0593"/>
<dbReference type="HOGENOM" id="CLU_034180_11_0_6"/>
<dbReference type="Proteomes" id="UP000001952">
    <property type="component" value="Chromosome"/>
</dbReference>
<dbReference type="GO" id="GO:0005886">
    <property type="term" value="C:plasma membrane"/>
    <property type="evidence" value="ECO:0007669"/>
    <property type="project" value="UniProtKB-SubCell"/>
</dbReference>
<dbReference type="GO" id="GO:0042931">
    <property type="term" value="F:enterobactin transmembrane transporter activity"/>
    <property type="evidence" value="ECO:0007669"/>
    <property type="project" value="InterPro"/>
</dbReference>
<dbReference type="CDD" id="cd06173">
    <property type="entry name" value="MFS_MefA_like"/>
    <property type="match status" value="1"/>
</dbReference>
<dbReference type="FunFam" id="1.20.1250.20:FF:000056">
    <property type="entry name" value="Enterobactin exporter EntS"/>
    <property type="match status" value="1"/>
</dbReference>
<dbReference type="Gene3D" id="1.20.1250.20">
    <property type="entry name" value="MFS general substrate transporter like domains"/>
    <property type="match status" value="1"/>
</dbReference>
<dbReference type="HAMAP" id="MF_01436">
    <property type="entry name" value="MFS_EntS"/>
    <property type="match status" value="1"/>
</dbReference>
<dbReference type="InterPro" id="IPR023722">
    <property type="entry name" value="Enterobactin_exp_EntS"/>
</dbReference>
<dbReference type="InterPro" id="IPR020846">
    <property type="entry name" value="MFS_dom"/>
</dbReference>
<dbReference type="InterPro" id="IPR036259">
    <property type="entry name" value="MFS_trans_sf"/>
</dbReference>
<dbReference type="InterPro" id="IPR010290">
    <property type="entry name" value="TM_effector"/>
</dbReference>
<dbReference type="NCBIfam" id="NF007792">
    <property type="entry name" value="PRK10489.1"/>
    <property type="match status" value="1"/>
</dbReference>
<dbReference type="PANTHER" id="PTHR23513:SF9">
    <property type="entry name" value="ENTEROBACTIN EXPORTER ENTS"/>
    <property type="match status" value="1"/>
</dbReference>
<dbReference type="PANTHER" id="PTHR23513">
    <property type="entry name" value="INTEGRAL MEMBRANE EFFLUX PROTEIN-RELATED"/>
    <property type="match status" value="1"/>
</dbReference>
<dbReference type="Pfam" id="PF05977">
    <property type="entry name" value="MFS_3"/>
    <property type="match status" value="1"/>
</dbReference>
<dbReference type="SUPFAM" id="SSF103473">
    <property type="entry name" value="MFS general substrate transporter"/>
    <property type="match status" value="1"/>
</dbReference>
<dbReference type="PROSITE" id="PS50850">
    <property type="entry name" value="MFS"/>
    <property type="match status" value="1"/>
</dbReference>
<evidence type="ECO:0000255" key="1">
    <source>
        <dbReference type="HAMAP-Rule" id="MF_01436"/>
    </source>
</evidence>
<proteinExistence type="inferred from homology"/>
<protein>
    <recommendedName>
        <fullName evidence="1">Enterobactin exporter EntS</fullName>
    </recommendedName>
</protein>
<gene>
    <name evidence="1" type="primary">entS</name>
    <name type="ordered locus">UTI89_C0593</name>
</gene>
<organism>
    <name type="scientific">Escherichia coli (strain UTI89 / UPEC)</name>
    <dbReference type="NCBI Taxonomy" id="364106"/>
    <lineage>
        <taxon>Bacteria</taxon>
        <taxon>Pseudomonadati</taxon>
        <taxon>Pseudomonadota</taxon>
        <taxon>Gammaproteobacteria</taxon>
        <taxon>Enterobacterales</taxon>
        <taxon>Enterobacteriaceae</taxon>
        <taxon>Escherichia</taxon>
    </lineage>
</organism>
<comment type="function">
    <text evidence="1">Component of an export pathway for enterobactin.</text>
</comment>
<comment type="subcellular location">
    <subcellularLocation>
        <location evidence="1">Cell inner membrane</location>
        <topology evidence="1">Multi-pass membrane protein</topology>
    </subcellularLocation>
</comment>
<comment type="similarity">
    <text evidence="1">Belongs to the major facilitator superfamily. EntS (TC 2.A.1.38) family.</text>
</comment>
<sequence length="416" mass="43313">MNKQSWLLNLSLLKTHPAFRAVFLARFISIVSLGLLGVAVPVQIQMMTHSTWQVGLSVTLTGGAMFVGLMVGGVLADRYERKKVILLARGTCGIGFIGLCLNALLPEPSLLAIYLLGLWDGFFASLGVTALLAATPALVGRENLMQAGAITMLTVRLGSVISPMIGGLLLATGGVAWNYGLAAAGTFITLLPLLSLPALPPPPQPREHPLKSLLAGFRFLLASPLVGGIALLGGLLTMASAVRVLYPALADNWQMSAAQIGFLYAAIPLGAAIGALTSGKLAHSVRPGLLMLLSTLGAFLAIGLFGLMPMWILGVVCLALFGWLSAVSSLLQYTMLQTQTPEAMLGRINGLWTAQNVTGDAIGAALLGGLGAMMTPVASASASGFGLLIIGVLLLLVLVELRRFRQTPPQVTASDS</sequence>
<keyword id="KW-0997">Cell inner membrane</keyword>
<keyword id="KW-1003">Cell membrane</keyword>
<keyword id="KW-0472">Membrane</keyword>
<keyword id="KW-0812">Transmembrane</keyword>
<keyword id="KW-1133">Transmembrane helix</keyword>
<keyword id="KW-0813">Transport</keyword>
<name>ENTS_ECOUT</name>
<accession>Q1REX1</accession>
<feature type="chain" id="PRO_0000301858" description="Enterobactin exporter EntS">
    <location>
        <begin position="1"/>
        <end position="416"/>
    </location>
</feature>
<feature type="topological domain" description="Cytoplasmic" evidence="1">
    <location>
        <begin position="1"/>
        <end position="21"/>
    </location>
</feature>
<feature type="transmembrane region" description="Helical" evidence="1">
    <location>
        <begin position="22"/>
        <end position="42"/>
    </location>
</feature>
<feature type="topological domain" description="Periplasmic" evidence="1">
    <location>
        <begin position="43"/>
        <end position="55"/>
    </location>
</feature>
<feature type="transmembrane region" description="Helical" evidence="1">
    <location>
        <begin position="56"/>
        <end position="76"/>
    </location>
</feature>
<feature type="topological domain" description="Cytoplasmic" evidence="1">
    <location>
        <begin position="77"/>
        <end position="83"/>
    </location>
</feature>
<feature type="transmembrane region" description="Helical" evidence="1">
    <location>
        <begin position="84"/>
        <end position="104"/>
    </location>
</feature>
<feature type="topological domain" description="Periplasmic" evidence="1">
    <location>
        <begin position="105"/>
        <end position="109"/>
    </location>
</feature>
<feature type="transmembrane region" description="Helical" evidence="1">
    <location>
        <begin position="110"/>
        <end position="130"/>
    </location>
</feature>
<feature type="topological domain" description="Cytoplasmic" evidence="1">
    <location>
        <begin position="131"/>
        <end position="156"/>
    </location>
</feature>
<feature type="transmembrane region" description="Helical" evidence="1">
    <location>
        <begin position="157"/>
        <end position="177"/>
    </location>
</feature>
<feature type="topological domain" description="Periplasmic" evidence="1">
    <location>
        <position position="178"/>
    </location>
</feature>
<feature type="transmembrane region" description="Helical" evidence="1">
    <location>
        <begin position="179"/>
        <end position="199"/>
    </location>
</feature>
<feature type="topological domain" description="Cytoplasmic" evidence="1">
    <location>
        <begin position="200"/>
        <end position="218"/>
    </location>
</feature>
<feature type="transmembrane region" description="Helical" evidence="1">
    <location>
        <begin position="219"/>
        <end position="239"/>
    </location>
</feature>
<feature type="topological domain" description="Periplasmic" evidence="1">
    <location>
        <begin position="240"/>
        <end position="256"/>
    </location>
</feature>
<feature type="transmembrane region" description="Helical" evidence="1">
    <location>
        <begin position="257"/>
        <end position="277"/>
    </location>
</feature>
<feature type="topological domain" description="Cytoplasmic" evidence="1">
    <location>
        <begin position="278"/>
        <end position="287"/>
    </location>
</feature>
<feature type="transmembrane region" description="Helical" evidence="1">
    <location>
        <begin position="288"/>
        <end position="307"/>
    </location>
</feature>
<feature type="topological domain" description="Periplasmic" evidence="1">
    <location>
        <begin position="308"/>
        <end position="313"/>
    </location>
</feature>
<feature type="transmembrane region" description="Helical" evidence="1">
    <location>
        <begin position="314"/>
        <end position="336"/>
    </location>
</feature>
<feature type="topological domain" description="Cytoplasmic" evidence="1">
    <location>
        <begin position="337"/>
        <end position="356"/>
    </location>
</feature>
<feature type="transmembrane region" description="Helical" evidence="1">
    <location>
        <begin position="357"/>
        <end position="377"/>
    </location>
</feature>
<feature type="topological domain" description="Periplasmic" evidence="1">
    <location>
        <position position="378"/>
    </location>
</feature>
<feature type="transmembrane region" description="Helical" evidence="1">
    <location>
        <begin position="379"/>
        <end position="399"/>
    </location>
</feature>
<feature type="topological domain" description="Cytoplasmic" evidence="1">
    <location>
        <begin position="400"/>
        <end position="416"/>
    </location>
</feature>